<gene>
    <name type="ordered locus">BOV_1726</name>
</gene>
<keyword id="KW-0413">Isomerase</keyword>
<sequence length="333" mass="36592">MARHSFFCVDGHTCGNPVRLVAGGGPNLNGSTMMEKRAHFLAEYDWIRTGLMFEPRGHDMMSGSILYPPTRPDCDVAVLFIETSGCLPMCGHGTIGTVTMAIEQGLVTPKTPGKLNLDTPAGLVAIEYEQDGQYVERVRLTNVPAFLYAEGLEVECPDLGPIKVDVAYGGNFYAIVEPQENYTDMDDYSALQLIAWSPVLRQRLNEKYKFQHPELPDINRLSHILWTGKPKHPQAHARNAVFYGDKAIDRSPCGTGTSARMAQLAAKGKLKPGDEFIHESIIGSLFHGRVERAAEVAGRPAIVPSIAGWARMTGYNTIFIDDRDPFAHGFSVA</sequence>
<organism>
    <name type="scientific">Brucella ovis (strain ATCC 25840 / 63/290 / NCTC 10512)</name>
    <dbReference type="NCBI Taxonomy" id="444178"/>
    <lineage>
        <taxon>Bacteria</taxon>
        <taxon>Pseudomonadati</taxon>
        <taxon>Pseudomonadota</taxon>
        <taxon>Alphaproteobacteria</taxon>
        <taxon>Hyphomicrobiales</taxon>
        <taxon>Brucellaceae</taxon>
        <taxon>Brucella/Ochrobactrum group</taxon>
        <taxon>Brucella</taxon>
    </lineage>
</organism>
<feature type="chain" id="PRO_0000354030" description="4-hydroxyproline epimerase">
    <location>
        <begin position="1"/>
        <end position="333"/>
    </location>
</feature>
<feature type="active site" description="Proton acceptor" evidence="2">
    <location>
        <position position="90"/>
    </location>
</feature>
<feature type="active site" description="Proton donor" evidence="2">
    <location>
        <position position="253"/>
    </location>
</feature>
<feature type="binding site" evidence="2">
    <location>
        <begin position="91"/>
        <end position="92"/>
    </location>
    <ligand>
        <name>substrate</name>
    </ligand>
</feature>
<feature type="binding site" evidence="2">
    <location>
        <position position="249"/>
    </location>
    <ligand>
        <name>substrate</name>
    </ligand>
</feature>
<feature type="binding site" evidence="2">
    <location>
        <begin position="254"/>
        <end position="255"/>
    </location>
    <ligand>
        <name>substrate</name>
    </ligand>
</feature>
<accession>A5VSD5</accession>
<reference key="1">
    <citation type="journal article" date="2009" name="PLoS ONE">
        <title>Genome degradation in Brucella ovis corresponds with narrowing of its host range and tissue tropism.</title>
        <authorList>
            <person name="Tsolis R.M."/>
            <person name="Seshadri R."/>
            <person name="Santos R.L."/>
            <person name="Sangari F.J."/>
            <person name="Lobo J.M."/>
            <person name="de Jong M.F."/>
            <person name="Ren Q."/>
            <person name="Myers G."/>
            <person name="Brinkac L.M."/>
            <person name="Nelson W.C."/>
            <person name="Deboy R.T."/>
            <person name="Angiuoli S."/>
            <person name="Khouri H."/>
            <person name="Dimitrov G."/>
            <person name="Robinson J.R."/>
            <person name="Mulligan S."/>
            <person name="Walker R.L."/>
            <person name="Elzer P.E."/>
            <person name="Hassan K.A."/>
            <person name="Paulsen I.T."/>
        </authorList>
    </citation>
    <scope>NUCLEOTIDE SEQUENCE [LARGE SCALE GENOMIC DNA]</scope>
    <source>
        <strain>ATCC 25840 / 63/290 / NCTC 10512</strain>
    </source>
</reference>
<name>4HYPE_BRUO2</name>
<comment type="function">
    <text evidence="1">Allows intracellular utilization of 4-hydroxyproline, one of the major constituents of host collagen, by converting 4-hydroxy-L-proline to 4-hydroxy-D-proline, which can be further metabolized by intracellular 4-hydroxy-D-proline oxidases. Strong B-cell mitogen. Plays an important role in the regulation of intra- and extracellular amino acid pools, allowing the bacterium to profit from host precursors and enzymatic pathways (By similarity).</text>
</comment>
<comment type="catalytic activity">
    <reaction>
        <text>trans-4-hydroxy-L-proline = cis-4-hydroxy-D-proline</text>
        <dbReference type="Rhea" id="RHEA:21152"/>
        <dbReference type="ChEBI" id="CHEBI:57690"/>
        <dbReference type="ChEBI" id="CHEBI:58375"/>
        <dbReference type="EC" id="5.1.1.8"/>
    </reaction>
</comment>
<comment type="subunit">
    <text evidence="1">Homodimer.</text>
</comment>
<comment type="similarity">
    <text evidence="3">Belongs to the proline racemase family.</text>
</comment>
<evidence type="ECO:0000250" key="1"/>
<evidence type="ECO:0000250" key="2">
    <source>
        <dbReference type="UniProtKB" id="Q4KGU2"/>
    </source>
</evidence>
<evidence type="ECO:0000305" key="3"/>
<dbReference type="EC" id="5.1.1.8"/>
<dbReference type="EMBL" id="CP000708">
    <property type="protein sequence ID" value="ABQ61519.1"/>
    <property type="molecule type" value="Genomic_DNA"/>
</dbReference>
<dbReference type="RefSeq" id="WP_004690494.1">
    <property type="nucleotide sequence ID" value="NC_009505.1"/>
</dbReference>
<dbReference type="SMR" id="A5VSD5"/>
<dbReference type="KEGG" id="bov:BOV_1726"/>
<dbReference type="HOGENOM" id="CLU_036729_0_0_5"/>
<dbReference type="PhylomeDB" id="A5VSD5"/>
<dbReference type="Proteomes" id="UP000006383">
    <property type="component" value="Chromosome I"/>
</dbReference>
<dbReference type="GO" id="GO:0047580">
    <property type="term" value="F:4-hydroxyproline epimerase activity"/>
    <property type="evidence" value="ECO:0007669"/>
    <property type="project" value="UniProtKB-EC"/>
</dbReference>
<dbReference type="FunFam" id="3.10.310.10:FF:000005">
    <property type="entry name" value="Proline racemase"/>
    <property type="match status" value="1"/>
</dbReference>
<dbReference type="Gene3D" id="3.10.310.10">
    <property type="entry name" value="Diaminopimelate Epimerase, Chain A, domain 1"/>
    <property type="match status" value="2"/>
</dbReference>
<dbReference type="InterPro" id="IPR008794">
    <property type="entry name" value="Pro_racemase_fam"/>
</dbReference>
<dbReference type="NCBIfam" id="NF010578">
    <property type="entry name" value="PRK13971.1"/>
    <property type="match status" value="1"/>
</dbReference>
<dbReference type="PANTHER" id="PTHR33442">
    <property type="entry name" value="TRANS-3-HYDROXY-L-PROLINE DEHYDRATASE"/>
    <property type="match status" value="1"/>
</dbReference>
<dbReference type="PANTHER" id="PTHR33442:SF1">
    <property type="entry name" value="TRANS-3-HYDROXY-L-PROLINE DEHYDRATASE"/>
    <property type="match status" value="1"/>
</dbReference>
<dbReference type="Pfam" id="PF05544">
    <property type="entry name" value="Pro_racemase"/>
    <property type="match status" value="1"/>
</dbReference>
<dbReference type="PIRSF" id="PIRSF029792">
    <property type="entry name" value="Pro_racemase"/>
    <property type="match status" value="1"/>
</dbReference>
<dbReference type="SFLD" id="SFLDS00028">
    <property type="entry name" value="Proline_Racemase"/>
    <property type="match status" value="1"/>
</dbReference>
<dbReference type="SUPFAM" id="SSF54506">
    <property type="entry name" value="Diaminopimelate epimerase-like"/>
    <property type="match status" value="1"/>
</dbReference>
<proteinExistence type="inferred from homology"/>
<protein>
    <recommendedName>
        <fullName>4-hydroxyproline epimerase</fullName>
        <ecNumber>5.1.1.8</ecNumber>
    </recommendedName>
    <alternativeName>
        <fullName>Hydroxyproline-2-epimerase</fullName>
        <shortName>HyPRE</shortName>
    </alternativeName>
</protein>